<protein>
    <recommendedName>
        <fullName>ORF6 protein</fullName>
        <shortName>ORF6</shortName>
    </recommendedName>
    <alternativeName>
        <fullName>Accessory protein 6</fullName>
    </alternativeName>
    <alternativeName>
        <fullName>Non-structural protein 6</fullName>
        <shortName>ns6</shortName>
    </alternativeName>
</protein>
<feature type="chain" id="PRO_0000289892" description="ORF6 protein">
    <location>
        <begin position="1"/>
        <end position="63"/>
    </location>
</feature>
<dbReference type="EMBL" id="DQ648857">
    <property type="protein sequence ID" value="ABG47073.1"/>
    <property type="molecule type" value="Genomic_RNA"/>
</dbReference>
<dbReference type="SMR" id="Q0Q471"/>
<dbReference type="Proteomes" id="UP000006573">
    <property type="component" value="Genome"/>
</dbReference>
<dbReference type="GO" id="GO:0044167">
    <property type="term" value="C:host cell endoplasmic reticulum membrane"/>
    <property type="evidence" value="ECO:0007669"/>
    <property type="project" value="UniProtKB-SubCell"/>
</dbReference>
<dbReference type="GO" id="GO:0044178">
    <property type="term" value="C:host cell Golgi membrane"/>
    <property type="evidence" value="ECO:0007669"/>
    <property type="project" value="UniProtKB-SubCell"/>
</dbReference>
<dbReference type="GO" id="GO:0016020">
    <property type="term" value="C:membrane"/>
    <property type="evidence" value="ECO:0007669"/>
    <property type="project" value="UniProtKB-KW"/>
</dbReference>
<dbReference type="InterPro" id="IPR022736">
    <property type="entry name" value="NS6_bCoV"/>
</dbReference>
<dbReference type="Pfam" id="PF12133">
    <property type="entry name" value="bCoV_NS6"/>
    <property type="match status" value="1"/>
</dbReference>
<proteinExistence type="inferred from homology"/>
<name>NS6_BC279</name>
<keyword id="KW-1038">Host endoplasmic reticulum</keyword>
<keyword id="KW-1040">Host Golgi apparatus</keyword>
<keyword id="KW-1043">Host membrane</keyword>
<keyword id="KW-0472">Membrane</keyword>
<keyword id="KW-0843">Virulence</keyword>
<evidence type="ECO:0000250" key="1"/>
<evidence type="ECO:0000305" key="2"/>
<organismHost>
    <name type="scientific">Rhinolophus macrotis</name>
    <name type="common">Big-eared horseshoe bat</name>
    <dbReference type="NCBI Taxonomy" id="196889"/>
</organismHost>
<accession>Q0Q471</accession>
<comment type="function">
    <text evidence="1">Could be a determinant of virus virulence. Seems to stimulate cellular DNA synthesis in vitro (By similarity).</text>
</comment>
<comment type="subcellular location">
    <subcellularLocation>
        <location evidence="1">Host endoplasmic reticulum membrane</location>
    </subcellularLocation>
    <subcellularLocation>
        <location evidence="1">Host Golgi apparatus membrane</location>
    </subcellularLocation>
</comment>
<comment type="miscellaneous">
    <text>Bat coronavirus 279/2005 is highly similar to SARS-CoV (SARS-like).</text>
</comment>
<comment type="similarity">
    <text evidence="2">Belongs to the coronaviruses accessory protein 6 family.</text>
</comment>
<reference key="1">
    <citation type="journal article" date="2006" name="J. Virol.">
        <title>Prevalence and genetic diversity of coronaviruses in bats from China.</title>
        <authorList>
            <person name="Tang X.C."/>
            <person name="Zhang J.X."/>
            <person name="Zhang S.Y."/>
            <person name="Wang P."/>
            <person name="Fan X.H."/>
            <person name="Li L.F."/>
            <person name="Li G."/>
            <person name="Dong B.Q."/>
            <person name="Liu W."/>
            <person name="Cheung C.L."/>
            <person name="Xu K.M."/>
            <person name="Song W.J."/>
            <person name="Vijaykrishna D."/>
            <person name="Poon L.L.M."/>
            <person name="Peiris J.S.M."/>
            <person name="Smith G.J."/>
            <person name="Chen H."/>
            <person name="Guan Y."/>
        </authorList>
    </citation>
    <scope>NUCLEOTIDE SEQUENCE [GENOMIC RNA]</scope>
</reference>
<sequence>MFHLVDFQVTIAEILIIIMKTFRVAIWNLDILISSIVRQLFKPLTKKKYSELDDEEPMELDYP</sequence>
<gene>
    <name type="ORF">6</name>
</gene>
<organism>
    <name type="scientific">Bat coronavirus 279/2005</name>
    <name type="common">BtCoV</name>
    <name type="synonym">BtCoV/279/2005</name>
    <dbReference type="NCBI Taxonomy" id="389167"/>
    <lineage>
        <taxon>Viruses</taxon>
        <taxon>Riboviria</taxon>
        <taxon>Orthornavirae</taxon>
        <taxon>Pisuviricota</taxon>
        <taxon>Pisoniviricetes</taxon>
        <taxon>Nidovirales</taxon>
        <taxon>Cornidovirineae</taxon>
        <taxon>Coronaviridae</taxon>
        <taxon>Orthocoronavirinae</taxon>
        <taxon>Betacoronavirus</taxon>
        <taxon>Sarbecovirus</taxon>
        <taxon>Severe acute respiratory syndrome coronavirus</taxon>
    </lineage>
</organism>